<keyword id="KW-0143">Chaperone</keyword>
<keyword id="KW-0217">Developmental protein</keyword>
<keyword id="KW-1185">Reference proteome</keyword>
<keyword id="KW-0346">Stress response</keyword>
<organism>
    <name type="scientific">Arabidopsis thaliana</name>
    <name type="common">Mouse-ear cress</name>
    <dbReference type="NCBI Taxonomy" id="3702"/>
    <lineage>
        <taxon>Eukaryota</taxon>
        <taxon>Viridiplantae</taxon>
        <taxon>Streptophyta</taxon>
        <taxon>Embryophyta</taxon>
        <taxon>Tracheophyta</taxon>
        <taxon>Spermatophyta</taxon>
        <taxon>Magnoliopsida</taxon>
        <taxon>eudicotyledons</taxon>
        <taxon>Gunneridae</taxon>
        <taxon>Pentapetalae</taxon>
        <taxon>rosids</taxon>
        <taxon>malvids</taxon>
        <taxon>Brassicales</taxon>
        <taxon>Brassicaceae</taxon>
        <taxon>Camelineae</taxon>
        <taxon>Arabidopsis</taxon>
    </lineage>
</organism>
<feature type="chain" id="PRO_0000450285" description="SEED MATURATION PROTEIN 1">
    <location>
        <begin position="1"/>
        <end position="86"/>
    </location>
</feature>
<feature type="region of interest" description="Disordered" evidence="1">
    <location>
        <begin position="52"/>
        <end position="86"/>
    </location>
</feature>
<feature type="compositionally biased region" description="Polar residues" evidence="1">
    <location>
        <begin position="60"/>
        <end position="70"/>
    </location>
</feature>
<feature type="compositionally biased region" description="Basic and acidic residues" evidence="1">
    <location>
        <begin position="71"/>
        <end position="86"/>
    </location>
</feature>
<proteinExistence type="inferred from homology"/>
<protein>
    <recommendedName>
        <fullName evidence="4">SEED MATURATION PROTEIN 1</fullName>
    </recommendedName>
    <alternativeName>
        <fullName evidence="5">Late embryogenesis abundant protein SMP1</fullName>
    </alternativeName>
</protein>
<reference key="1">
    <citation type="journal article" date="2000" name="DNA Res.">
        <title>Structural analysis of Arabidopsis thaliana chromosome 3. I. Sequence features of the regions of 4,504,864 bp covered by sixty P1 and TAC clones.</title>
        <authorList>
            <person name="Sato S."/>
            <person name="Nakamura Y."/>
            <person name="Kaneko T."/>
            <person name="Katoh T."/>
            <person name="Asamizu E."/>
            <person name="Tabata S."/>
        </authorList>
    </citation>
    <scope>NUCLEOTIDE SEQUENCE [LARGE SCALE GENOMIC DNA]</scope>
    <source>
        <strain>cv. Columbia</strain>
    </source>
</reference>
<reference key="2">
    <citation type="journal article" date="2017" name="Plant J.">
        <title>Araport11: a complete reannotation of the Arabidopsis thaliana reference genome.</title>
        <authorList>
            <person name="Cheng C.Y."/>
            <person name="Krishnakumar V."/>
            <person name="Chan A.P."/>
            <person name="Thibaud-Nissen F."/>
            <person name="Schobel S."/>
            <person name="Town C.D."/>
        </authorList>
    </citation>
    <scope>GENOME REANNOTATION</scope>
    <source>
        <strain>cv. Columbia</strain>
    </source>
</reference>
<reference key="3">
    <citation type="submission" date="2004-06" db="EMBL/GenBank/DDBJ databases">
        <title>Arabidopsis cDNA clones.</title>
        <authorList>
            <person name="Kim C.J."/>
            <person name="Chen H."/>
            <person name="Cheuk R.F."/>
            <person name="Shinn P."/>
            <person name="Ecker J.R."/>
        </authorList>
    </citation>
    <scope>NUCLEOTIDE SEQUENCE [LARGE SCALE MRNA]</scope>
    <source>
        <strain>cv. Columbia</strain>
    </source>
</reference>
<reference key="4">
    <citation type="journal article" date="2010" name="J. Biol. Chem.">
        <title>Substrates of the Arabidopsis thaliana protein isoaspartyl methyltransferase 1 identified using phage display and biopanning.</title>
        <authorList>
            <person name="Chen T."/>
            <person name="Nayak N."/>
            <person name="Majee S.M."/>
            <person name="Lowenson J."/>
            <person name="Schaefermeyer K.R."/>
            <person name="Eliopoulos A.C."/>
            <person name="Lloyd T.D."/>
            <person name="Dinkins R."/>
            <person name="Perry S.E."/>
            <person name="Forsthoefel N.R."/>
            <person name="Clarke S.G."/>
            <person name="Vernon D.M."/>
            <person name="Zhou Z.S."/>
            <person name="Rejtar T."/>
            <person name="Downie A.B."/>
        </authorList>
    </citation>
    <scope>FUNCTION</scope>
    <scope>DISRUPTION PHENOTYPE</scope>
    <source>
        <strain>cv. Columbia</strain>
        <strain>cv. Landsberg erecta</strain>
    </source>
</reference>
<reference key="5">
    <citation type="journal article" date="2012" name="Int. J. Mol. Sci.">
        <title>Identification of late embryogenesis abundant (LEA) protein putative interactors using phage display.</title>
        <authorList>
            <person name="Kushwaha R."/>
            <person name="Lloyd T.D."/>
            <person name="Schaefermeyer K.R."/>
            <person name="Kumar S."/>
            <person name="Downie A.B."/>
        </authorList>
    </citation>
    <scope>FUNCTION</scope>
    <scope>MISCELLANEOUS</scope>
</reference>
<dbReference type="EMBL" id="AB026645">
    <property type="protein sequence ID" value="BAB02504.1"/>
    <property type="molecule type" value="Genomic_DNA"/>
</dbReference>
<dbReference type="EMBL" id="CP002686">
    <property type="protein sequence ID" value="AEE75267.1"/>
    <property type="molecule type" value="Genomic_DNA"/>
</dbReference>
<dbReference type="EMBL" id="BT014911">
    <property type="protein sequence ID" value="AAT46040.1"/>
    <property type="molecule type" value="mRNA"/>
</dbReference>
<dbReference type="EMBL" id="BT015752">
    <property type="protein sequence ID" value="AAU84689.1"/>
    <property type="molecule type" value="mRNA"/>
</dbReference>
<dbReference type="RefSeq" id="NP_187902.1">
    <property type="nucleotide sequence ID" value="NM_112133.4"/>
</dbReference>
<dbReference type="SMR" id="Q9LE44"/>
<dbReference type="FunCoup" id="Q9LE44">
    <property type="interactions" value="63"/>
</dbReference>
<dbReference type="STRING" id="3702.Q9LE44"/>
<dbReference type="iPTMnet" id="Q9LE44"/>
<dbReference type="PaxDb" id="3702-AT3G12960.1"/>
<dbReference type="ProMEX" id="Q9LE44"/>
<dbReference type="ProteomicsDB" id="179200"/>
<dbReference type="DNASU" id="820482"/>
<dbReference type="EnsemblPlants" id="AT3G12960.1">
    <property type="protein sequence ID" value="AT3G12960.1"/>
    <property type="gene ID" value="AT3G12960"/>
</dbReference>
<dbReference type="GeneID" id="820482"/>
<dbReference type="Gramene" id="AT3G12960.1">
    <property type="protein sequence ID" value="AT3G12960.1"/>
    <property type="gene ID" value="AT3G12960"/>
</dbReference>
<dbReference type="KEGG" id="ath:AT3G12960"/>
<dbReference type="Araport" id="AT3G12960"/>
<dbReference type="TAIR" id="AT3G12960">
    <property type="gene designation" value="SMP1"/>
</dbReference>
<dbReference type="eggNOG" id="ENOG502S78Z">
    <property type="taxonomic scope" value="Eukaryota"/>
</dbReference>
<dbReference type="HOGENOM" id="CLU_165774_2_0_1"/>
<dbReference type="InParanoid" id="Q9LE44"/>
<dbReference type="OMA" id="IRVSYKH"/>
<dbReference type="OrthoDB" id="1653447at2759"/>
<dbReference type="PhylomeDB" id="Q9LE44"/>
<dbReference type="PRO" id="PR:Q9LE44"/>
<dbReference type="Proteomes" id="UP000006548">
    <property type="component" value="Chromosome 3"/>
</dbReference>
<dbReference type="ExpressionAtlas" id="Q9LE44">
    <property type="expression patterns" value="baseline and differential"/>
</dbReference>
<dbReference type="GO" id="GO:0044183">
    <property type="term" value="F:protein folding chaperone"/>
    <property type="evidence" value="ECO:0000314"/>
    <property type="project" value="UniProtKB"/>
</dbReference>
<dbReference type="GO" id="GO:0010231">
    <property type="term" value="P:maintenance of seed dormancy"/>
    <property type="evidence" value="ECO:0000315"/>
    <property type="project" value="UniProtKB"/>
</dbReference>
<dbReference type="GO" id="GO:0009408">
    <property type="term" value="P:response to heat"/>
    <property type="evidence" value="ECO:0000315"/>
    <property type="project" value="UniProtKB"/>
</dbReference>
<dbReference type="GO" id="GO:0010162">
    <property type="term" value="P:seed dormancy process"/>
    <property type="evidence" value="ECO:0000315"/>
    <property type="project" value="TAIR"/>
</dbReference>
<dbReference type="InterPro" id="IPR044984">
    <property type="entry name" value="SMP1"/>
</dbReference>
<dbReference type="PANTHER" id="PTHR37732">
    <property type="entry name" value="OS08G0104400 PROTEIN"/>
    <property type="match status" value="1"/>
</dbReference>
<dbReference type="PANTHER" id="PTHR37732:SF2">
    <property type="entry name" value="SEED MATURATION PROTEIN 1"/>
    <property type="match status" value="1"/>
</dbReference>
<comment type="function">
    <text evidence="2 3">Protein chaperone involved in seed maturation and dormancy maintenance after high temperature fluctuation (e.g. secondary dormancy after 3 days at 40 degrees Celsius), probably by protecting heat labile proteins required for secondary dormancy (e.g. G6PDH, HOP3, SR45, ECP63, SCL33, RPL32B, ChlADR1, MSBP1, MBF1B, At3g01690, At1g15280, At1g15290, At2g31410, At1g11630, At1g65090, EMB2279, EMB1674 and RPL35C).</text>
</comment>
<comment type="disruption phenotype">
    <text evidence="2">Increased seed germination rate after high temperature fluctuation due to a reduced seed dormancy; fail to enter secondary dormancy after 3 days at 40 degrees Celsius.</text>
</comment>
<comment type="miscellaneous">
    <text evidence="3">Boiling-stable protein.</text>
</comment>
<comment type="similarity">
    <text evidence="6">Belongs to the LEA type 3 family.</text>
</comment>
<evidence type="ECO:0000256" key="1">
    <source>
        <dbReference type="SAM" id="MobiDB-lite"/>
    </source>
</evidence>
<evidence type="ECO:0000269" key="2">
    <source>
    </source>
</evidence>
<evidence type="ECO:0000269" key="3">
    <source>
    </source>
</evidence>
<evidence type="ECO:0000303" key="4">
    <source>
    </source>
</evidence>
<evidence type="ECO:0000303" key="5">
    <source>
    </source>
</evidence>
<evidence type="ECO:0000305" key="6"/>
<evidence type="ECO:0000312" key="7">
    <source>
        <dbReference type="Araport" id="AT3G12960"/>
    </source>
</evidence>
<evidence type="ECO:0000312" key="8">
    <source>
        <dbReference type="EMBL" id="BAB02504.1"/>
    </source>
</evidence>
<name>SMP1_ARATH</name>
<gene>
    <name evidence="4" type="primary">SMP1</name>
    <name evidence="7" type="ordered locus">At3g12960</name>
    <name evidence="8" type="ORF">MGH6.8</name>
</gene>
<sequence>MAKNKDDIKYATAQAKLSEDEAIRVSYKHGTPLEGGKIAESEPVELFSSAQRIEKGKEQSAASGDQTQIQRDIKDIKGTRTDDSPR</sequence>
<accession>Q9LE44</accession>
<accession>A0A178VH69</accession>